<comment type="function">
    <text evidence="2 4">Catalyzes the formation of 2'-nucleotide products from 2',3'-cyclic substrates (By similarity). May participate in RNA metabolism in the myelinating cell, CNP is the third most abundant protein in central nervous system myelin (By similarity).</text>
</comment>
<comment type="catalytic activity">
    <reaction evidence="2">
        <text>a nucleoside 2',3'-cyclic phosphate + H2O = a nucleoside 2'-phosphate + H(+)</text>
        <dbReference type="Rhea" id="RHEA:14489"/>
        <dbReference type="ChEBI" id="CHEBI:15377"/>
        <dbReference type="ChEBI" id="CHEBI:15378"/>
        <dbReference type="ChEBI" id="CHEBI:66954"/>
        <dbReference type="ChEBI" id="CHEBI:78552"/>
        <dbReference type="EC" id="3.1.4.37"/>
    </reaction>
</comment>
<comment type="subunit">
    <text evidence="4">Exists as monomers and homodimers.</text>
</comment>
<comment type="interaction">
    <interactant intactId="EBI-1059219">
        <id>P09543</id>
    </interactant>
    <interactant intactId="EBI-466029">
        <id>P42858</id>
        <label>HTT</label>
    </interactant>
    <organismsDiffer>false</organismsDiffer>
    <experiments>10</experiments>
</comment>
<comment type="subcellular location">
    <subcellularLocation>
        <location evidence="4">Membrane</location>
        <topology evidence="4">Lipid-anchor</topology>
    </subcellularLocation>
    <subcellularLocation>
        <location evidence="5">Melanosome</location>
    </subcellularLocation>
    <text evidence="4">Firmly bound to membrane structures of brain white matter.</text>
</comment>
<comment type="alternative products">
    <event type="alternative splicing"/>
    <isoform>
        <id>P09543-1</id>
        <name>CNPII</name>
        <name>DNAII</name>
        <sequence type="displayed"/>
    </isoform>
    <isoform>
        <id>P09543-2</id>
        <name>CNPI</name>
        <name>DNAI</name>
        <sequence type="described" ref="VSP_004171"/>
    </isoform>
</comment>
<comment type="disease" evidence="6">
    <disease id="DI-05951">
        <name>Leukodystrophy, hypomyelinating, 20</name>
        <acronym>HLD20</acronym>
        <description>An autosomal recessive disorder characterized by neuroregression and loss of motor, language and cognitive skills, after a normal early development. Disease onset is between 12 and 18 month of age. Patients show poor overall growth, microcephaly, feeding difficulties and spastic quadriplegia. Some patients may have seizures. Death in childhood may occur. Hypomyelinating leukodystrophy with subcortical and periventricular white matter abnormalities is seen on brain imaging.</description>
        <dbReference type="MIM" id="619071"/>
    </disease>
    <text>The disease may be caused by variants affecting the gene represented in this entry.</text>
</comment>
<comment type="similarity">
    <text evidence="9">Belongs to the 2H phosphoesterase superfamily. CNPase family.</text>
</comment>
<name>CN37_HUMAN</name>
<organism>
    <name type="scientific">Homo sapiens</name>
    <name type="common">Human</name>
    <dbReference type="NCBI Taxonomy" id="9606"/>
    <lineage>
        <taxon>Eukaryota</taxon>
        <taxon>Metazoa</taxon>
        <taxon>Chordata</taxon>
        <taxon>Craniata</taxon>
        <taxon>Vertebrata</taxon>
        <taxon>Euteleostomi</taxon>
        <taxon>Mammalia</taxon>
        <taxon>Eutheria</taxon>
        <taxon>Euarchontoglires</taxon>
        <taxon>Primates</taxon>
        <taxon>Haplorrhini</taxon>
        <taxon>Catarrhini</taxon>
        <taxon>Hominidae</taxon>
        <taxon>Homo</taxon>
    </lineage>
</organism>
<feature type="chain" id="PRO_0000089961" description="2',3'-cyclic-nucleotide 3'-phosphodiesterase">
    <location>
        <begin position="1"/>
        <end position="418"/>
    </location>
</feature>
<feature type="propeptide" id="PRO_0000422296" description="Removed in mature form" evidence="1">
    <location>
        <begin position="419"/>
        <end position="421"/>
    </location>
</feature>
<feature type="active site" description="Proton acceptor">
    <location>
        <position position="251"/>
    </location>
</feature>
<feature type="active site" description="Proton donor">
    <location>
        <position position="330"/>
    </location>
</feature>
<feature type="binding site">
    <location>
        <position position="253"/>
    </location>
    <ligand>
        <name>substrate</name>
    </ligand>
</feature>
<feature type="binding site">
    <location>
        <position position="332"/>
    </location>
    <ligand>
        <name>substrate</name>
    </ligand>
</feature>
<feature type="modified residue" description="Phosphoserine" evidence="11">
    <location>
        <position position="6"/>
    </location>
</feature>
<feature type="modified residue" description="Phosphoserine" evidence="11">
    <location>
        <position position="9"/>
    </location>
</feature>
<feature type="modified residue" description="Phosphotyrosine" evidence="4">
    <location>
        <position position="110"/>
    </location>
</feature>
<feature type="modified residue" description="Phosphoserine" evidence="11">
    <location>
        <position position="170"/>
    </location>
</feature>
<feature type="modified residue" description="Phosphoserine" evidence="3">
    <location>
        <position position="359"/>
    </location>
</feature>
<feature type="modified residue" description="Cysteine methyl ester" evidence="1">
    <location>
        <position position="418"/>
    </location>
</feature>
<feature type="lipid moiety-binding region" description="S-farnesyl cysteine" evidence="1">
    <location>
        <position position="418"/>
    </location>
</feature>
<feature type="splice variant" id="VSP_004171" description="In isoform CNPI." evidence="7 8">
    <location>
        <begin position="1"/>
        <end position="20"/>
    </location>
</feature>
<feature type="sequence variant" id="VAR_085056" description="In HLD20; uncertain significance; decreased protein levels in patient cells; dbSNP:rs2050933471." evidence="6">
    <original>S</original>
    <variation>L</variation>
    <location>
        <position position="82"/>
    </location>
</feature>
<feature type="sequence variant" id="VAR_033746" description="In dbSNP:rs34353668.">
    <original>Q</original>
    <variation>R</variation>
    <location>
        <position position="207"/>
    </location>
</feature>
<feature type="strand" evidence="12">
    <location>
        <begin position="188"/>
        <end position="194"/>
    </location>
</feature>
<feature type="helix" evidence="12">
    <location>
        <begin position="196"/>
        <end position="215"/>
    </location>
</feature>
<feature type="helix" evidence="12">
    <location>
        <begin position="217"/>
        <end position="221"/>
    </location>
</feature>
<feature type="helix" evidence="12">
    <location>
        <begin position="223"/>
        <end position="226"/>
    </location>
</feature>
<feature type="helix" evidence="12">
    <location>
        <begin position="238"/>
        <end position="241"/>
    </location>
</feature>
<feature type="strand" evidence="12">
    <location>
        <begin position="251"/>
        <end position="256"/>
    </location>
</feature>
<feature type="helix" evidence="12">
    <location>
        <begin position="258"/>
        <end position="260"/>
    </location>
</feature>
<feature type="helix" evidence="12">
    <location>
        <begin position="265"/>
        <end position="270"/>
    </location>
</feature>
<feature type="helix" evidence="12">
    <location>
        <begin position="272"/>
        <end position="277"/>
    </location>
</feature>
<feature type="strand" evidence="12">
    <location>
        <begin position="281"/>
        <end position="291"/>
    </location>
</feature>
<feature type="strand" evidence="12">
    <location>
        <begin position="293"/>
        <end position="301"/>
    </location>
</feature>
<feature type="helix" evidence="12">
    <location>
        <begin position="306"/>
        <end position="309"/>
    </location>
</feature>
<feature type="turn" evidence="12">
    <location>
        <begin position="325"/>
        <end position="328"/>
    </location>
</feature>
<feature type="strand" evidence="12">
    <location>
        <begin position="330"/>
        <end position="335"/>
    </location>
</feature>
<feature type="helix" evidence="12">
    <location>
        <begin position="343"/>
        <end position="356"/>
    </location>
</feature>
<feature type="strand" evidence="12">
    <location>
        <begin position="362"/>
        <end position="367"/>
    </location>
</feature>
<feature type="strand" evidence="12">
    <location>
        <begin position="370"/>
        <end position="376"/>
    </location>
</feature>
<feature type="strand" evidence="12">
    <location>
        <begin position="379"/>
        <end position="397"/>
    </location>
</feature>
<sequence length="421" mass="47579">MNRGFSRKSHTFLPKIFFRKMSSSGAKDKPELQFPFLQDEDTVATLLECKTLFILRGLPGSGKSTLARVIVDKYRDGTKMVSADAYKITPGARGAFSEEYKRLDEDLAAYCRRRDIRILVLDDTNHERERLEQLFEMADQYQYQVVLVEPKTAWRLDCAQLKEKNQWQLSADDLKKLKPGLEKDFLPLYFGWFLTKKSSETLRKAGQVFLEELGNHKAFKKELRQFVPGDEPREKMDLVTYFGKRPPGVLHCTTKFCDYGKAPGAEEYAQQDVLKKSYSKAFTLTISALFVTPKTTGARVELSEQQLQLWPSDVDKLSPTDNLPRGSRAHITLGCAADVEAVQTGLDLLEILRQEKGGSRGEEVGELSRGKLYSLGNGRWMLTLAKNMEVRAIFTGYYGKGKPVPTQGSRKGGALQSCTII</sequence>
<proteinExistence type="evidence at protein level"/>
<accession>P09543</accession>
<dbReference type="EC" id="3.1.4.37" evidence="2"/>
<dbReference type="EMBL" id="S46849">
    <property type="protein sequence ID" value="AAB23928.2"/>
    <property type="molecule type" value="Genomic_DNA"/>
</dbReference>
<dbReference type="EMBL" id="S46843">
    <property type="protein sequence ID" value="AAB23928.2"/>
    <property type="status" value="JOINED"/>
    <property type="molecule type" value="Genomic_DNA"/>
</dbReference>
<dbReference type="EMBL" id="S46845">
    <property type="protein sequence ID" value="AAB23928.2"/>
    <property type="status" value="JOINED"/>
    <property type="molecule type" value="Genomic_DNA"/>
</dbReference>
<dbReference type="EMBL" id="S46846">
    <property type="protein sequence ID" value="AAB23928.2"/>
    <property type="status" value="JOINED"/>
    <property type="molecule type" value="Genomic_DNA"/>
</dbReference>
<dbReference type="EMBL" id="M19650">
    <property type="protein sequence ID" value="AAA35704.1"/>
    <property type="molecule type" value="mRNA"/>
</dbReference>
<dbReference type="EMBL" id="D13146">
    <property type="protein sequence ID" value="BAA39694.1"/>
    <property type="molecule type" value="Genomic_DNA"/>
</dbReference>
<dbReference type="EMBL" id="D13146">
    <property type="protein sequence ID" value="BAA02435.1"/>
    <property type="molecule type" value="Genomic_DNA"/>
</dbReference>
<dbReference type="EMBL" id="S50017">
    <property type="protein sequence ID" value="AAB24298.2"/>
    <property type="molecule type" value="Genomic_DNA"/>
</dbReference>
<dbReference type="EMBL" id="S50013">
    <property type="protein sequence ID" value="AAB24298.2"/>
    <property type="status" value="JOINED"/>
    <property type="molecule type" value="Genomic_DNA"/>
</dbReference>
<dbReference type="EMBL" id="S50014">
    <property type="protein sequence ID" value="AAB24298.2"/>
    <property type="status" value="JOINED"/>
    <property type="molecule type" value="Genomic_DNA"/>
</dbReference>
<dbReference type="EMBL" id="S50016">
    <property type="protein sequence ID" value="AAB24298.2"/>
    <property type="status" value="JOINED"/>
    <property type="molecule type" value="Genomic_DNA"/>
</dbReference>
<dbReference type="EMBL" id="AC125257">
    <property type="status" value="NOT_ANNOTATED_CDS"/>
    <property type="molecule type" value="Genomic_DNA"/>
</dbReference>
<dbReference type="EMBL" id="BC001362">
    <property type="protein sequence ID" value="AAH01362.1"/>
    <property type="molecule type" value="mRNA"/>
</dbReference>
<dbReference type="EMBL" id="BC006392">
    <property type="protein sequence ID" value="AAH06392.1"/>
    <property type="molecule type" value="mRNA"/>
</dbReference>
<dbReference type="EMBL" id="BC011046">
    <property type="protein sequence ID" value="AAH11046.1"/>
    <property type="molecule type" value="mRNA"/>
</dbReference>
<dbReference type="EMBL" id="BC028040">
    <property type="protein sequence ID" value="AAH28040.1"/>
    <property type="molecule type" value="mRNA"/>
</dbReference>
<dbReference type="CCDS" id="CCDS11414.2">
    <molecule id="P09543-1"/>
</dbReference>
<dbReference type="CCDS" id="CCDS82123.1">
    <molecule id="P09543-2"/>
</dbReference>
<dbReference type="PIR" id="JC1517">
    <property type="entry name" value="JC1517"/>
</dbReference>
<dbReference type="RefSeq" id="NP_001317145.1">
    <molecule id="P09543-2"/>
    <property type="nucleotide sequence ID" value="NM_001330216.2"/>
</dbReference>
<dbReference type="RefSeq" id="NP_149124.3">
    <molecule id="P09543-1"/>
    <property type="nucleotide sequence ID" value="NM_033133.4"/>
</dbReference>
<dbReference type="RefSeq" id="XP_011522642.1">
    <molecule id="P09543-2"/>
    <property type="nucleotide sequence ID" value="XM_011524340.3"/>
</dbReference>
<dbReference type="RefSeq" id="XP_054171055.1">
    <molecule id="P09543-2"/>
    <property type="nucleotide sequence ID" value="XM_054315080.1"/>
</dbReference>
<dbReference type="PDB" id="1WOJ">
    <property type="method" value="X-ray"/>
    <property type="resolution" value="1.80 A"/>
    <property type="chains" value="A=186-399"/>
</dbReference>
<dbReference type="PDBsum" id="1WOJ"/>
<dbReference type="SMR" id="P09543"/>
<dbReference type="BioGRID" id="107667">
    <property type="interactions" value="216"/>
</dbReference>
<dbReference type="CORUM" id="P09543"/>
<dbReference type="FunCoup" id="P09543">
    <property type="interactions" value="1356"/>
</dbReference>
<dbReference type="IntAct" id="P09543">
    <property type="interactions" value="111"/>
</dbReference>
<dbReference type="MINT" id="P09543"/>
<dbReference type="STRING" id="9606.ENSP00000377470"/>
<dbReference type="GlyGen" id="P09543">
    <property type="glycosylation" value="1 site, 1 O-linked glycan (1 site)"/>
</dbReference>
<dbReference type="iPTMnet" id="P09543"/>
<dbReference type="PhosphoSitePlus" id="P09543"/>
<dbReference type="SwissPalm" id="P09543"/>
<dbReference type="BioMuta" id="CNP"/>
<dbReference type="DMDM" id="1705945"/>
<dbReference type="jPOST" id="P09543"/>
<dbReference type="MassIVE" id="P09543"/>
<dbReference type="PaxDb" id="9606-ENSP00000377470"/>
<dbReference type="PeptideAtlas" id="P09543"/>
<dbReference type="ProteomicsDB" id="52244">
    <molecule id="P09543-1"/>
</dbReference>
<dbReference type="ProteomicsDB" id="52245">
    <molecule id="P09543-2"/>
</dbReference>
<dbReference type="Pumba" id="P09543"/>
<dbReference type="Antibodypedia" id="3629">
    <property type="antibodies" value="551 antibodies from 44 providers"/>
</dbReference>
<dbReference type="DNASU" id="1267"/>
<dbReference type="Ensembl" id="ENST00000393888.1">
    <molecule id="P09543-2"/>
    <property type="protein sequence ID" value="ENSP00000377466.1"/>
    <property type="gene ID" value="ENSG00000173786.17"/>
</dbReference>
<dbReference type="Ensembl" id="ENST00000393892.8">
    <molecule id="P09543-1"/>
    <property type="protein sequence ID" value="ENSP00000377470.2"/>
    <property type="gene ID" value="ENSG00000173786.17"/>
</dbReference>
<dbReference type="GeneID" id="1267"/>
<dbReference type="KEGG" id="hsa:1267"/>
<dbReference type="MANE-Select" id="ENST00000393892.8">
    <property type="protein sequence ID" value="ENSP00000377470.2"/>
    <property type="RefSeq nucleotide sequence ID" value="NM_033133.5"/>
    <property type="RefSeq protein sequence ID" value="NP_149124.3"/>
</dbReference>
<dbReference type="UCSC" id="uc002hyl.2">
    <molecule id="P09543-1"/>
    <property type="organism name" value="human"/>
</dbReference>
<dbReference type="AGR" id="HGNC:2158"/>
<dbReference type="CTD" id="1267"/>
<dbReference type="DisGeNET" id="1267"/>
<dbReference type="GeneCards" id="CNP"/>
<dbReference type="HGNC" id="HGNC:2158">
    <property type="gene designation" value="CNP"/>
</dbReference>
<dbReference type="HPA" id="ENSG00000173786">
    <property type="expression patterns" value="Tissue enriched (brain)"/>
</dbReference>
<dbReference type="MalaCards" id="CNP"/>
<dbReference type="MIM" id="123830">
    <property type="type" value="gene"/>
</dbReference>
<dbReference type="MIM" id="619071">
    <property type="type" value="phenotype"/>
</dbReference>
<dbReference type="neXtProt" id="NX_P09543"/>
<dbReference type="OpenTargets" id="ENSG00000173786"/>
<dbReference type="PharmGKB" id="PA26680"/>
<dbReference type="VEuPathDB" id="HostDB:ENSG00000173786"/>
<dbReference type="eggNOG" id="KOG2401">
    <property type="taxonomic scope" value="Eukaryota"/>
</dbReference>
<dbReference type="GeneTree" id="ENSGT00510000048410"/>
<dbReference type="HOGENOM" id="CLU_039178_0_0_1"/>
<dbReference type="InParanoid" id="P09543"/>
<dbReference type="OMA" id="DAYKINP"/>
<dbReference type="OrthoDB" id="3231855at2759"/>
<dbReference type="PAN-GO" id="P09543">
    <property type="GO annotations" value="2 GO annotations based on evolutionary models"/>
</dbReference>
<dbReference type="PhylomeDB" id="P09543"/>
<dbReference type="TreeFam" id="TF332157"/>
<dbReference type="BRENDA" id="3.1.4.37">
    <property type="organism ID" value="2681"/>
</dbReference>
<dbReference type="BRENDA" id="3.1.4.58">
    <property type="organism ID" value="2681"/>
</dbReference>
<dbReference type="PathwayCommons" id="P09543"/>
<dbReference type="SignaLink" id="P09543"/>
<dbReference type="SIGNOR" id="P09543"/>
<dbReference type="BioGRID-ORCS" id="1267">
    <property type="hits" value="32 hits in 1159 CRISPR screens"/>
</dbReference>
<dbReference type="CD-CODE" id="FB4E32DD">
    <property type="entry name" value="Presynaptic clusters and postsynaptic densities"/>
</dbReference>
<dbReference type="ChiTaRS" id="CNP">
    <property type="organism name" value="human"/>
</dbReference>
<dbReference type="EvolutionaryTrace" id="P09543"/>
<dbReference type="GeneWiki" id="2%27,3%27-Cyclic-nucleotide_3%27-phosphodiesterase"/>
<dbReference type="GenomeRNAi" id="1267"/>
<dbReference type="Pharos" id="P09543">
    <property type="development level" value="Tbio"/>
</dbReference>
<dbReference type="PRO" id="PR:P09543"/>
<dbReference type="Proteomes" id="UP000005640">
    <property type="component" value="Chromosome 17"/>
</dbReference>
<dbReference type="RNAct" id="P09543">
    <property type="molecule type" value="protein"/>
</dbReference>
<dbReference type="Bgee" id="ENSG00000173786">
    <property type="expression patterns" value="Expressed in inferior olivary complex and 201 other cell types or tissues"/>
</dbReference>
<dbReference type="ExpressionAtlas" id="P09543">
    <property type="expression patterns" value="baseline and differential"/>
</dbReference>
<dbReference type="GO" id="GO:0005737">
    <property type="term" value="C:cytoplasm"/>
    <property type="evidence" value="ECO:0000314"/>
    <property type="project" value="BHF-UCL"/>
</dbReference>
<dbReference type="GO" id="GO:0070062">
    <property type="term" value="C:extracellular exosome"/>
    <property type="evidence" value="ECO:0007005"/>
    <property type="project" value="UniProtKB"/>
</dbReference>
<dbReference type="GO" id="GO:0005615">
    <property type="term" value="C:extracellular space"/>
    <property type="evidence" value="ECO:0000314"/>
    <property type="project" value="BHF-UCL"/>
</dbReference>
<dbReference type="GO" id="GO:0042470">
    <property type="term" value="C:melanosome"/>
    <property type="evidence" value="ECO:0007669"/>
    <property type="project" value="UniProtKB-SubCell"/>
</dbReference>
<dbReference type="GO" id="GO:0016020">
    <property type="term" value="C:membrane"/>
    <property type="evidence" value="ECO:0007005"/>
    <property type="project" value="UniProtKB"/>
</dbReference>
<dbReference type="GO" id="GO:0005874">
    <property type="term" value="C:microtubule"/>
    <property type="evidence" value="ECO:0000314"/>
    <property type="project" value="UniProtKB"/>
</dbReference>
<dbReference type="GO" id="GO:0043209">
    <property type="term" value="C:myelin sheath"/>
    <property type="evidence" value="ECO:0007669"/>
    <property type="project" value="Ensembl"/>
</dbReference>
<dbReference type="GO" id="GO:0045202">
    <property type="term" value="C:synapse"/>
    <property type="evidence" value="ECO:0007669"/>
    <property type="project" value="GOC"/>
</dbReference>
<dbReference type="GO" id="GO:0004113">
    <property type="term" value="F:2',3'-cyclic-nucleotide 3'-phosphodiesterase activity"/>
    <property type="evidence" value="ECO:0000250"/>
    <property type="project" value="UniProtKB"/>
</dbReference>
<dbReference type="GO" id="GO:0003723">
    <property type="term" value="F:RNA binding"/>
    <property type="evidence" value="ECO:0007669"/>
    <property type="project" value="UniProtKB-KW"/>
</dbReference>
<dbReference type="GO" id="GO:0008344">
    <property type="term" value="P:adult locomotory behavior"/>
    <property type="evidence" value="ECO:0007669"/>
    <property type="project" value="Ensembl"/>
</dbReference>
<dbReference type="GO" id="GO:0007409">
    <property type="term" value="P:axonogenesis"/>
    <property type="evidence" value="ECO:0007669"/>
    <property type="project" value="Ensembl"/>
</dbReference>
<dbReference type="GO" id="GO:0007268">
    <property type="term" value="P:chemical synaptic transmission"/>
    <property type="evidence" value="ECO:0000304"/>
    <property type="project" value="ProtInc"/>
</dbReference>
<dbReference type="GO" id="GO:0009214">
    <property type="term" value="P:cyclic nucleotide catabolic process"/>
    <property type="evidence" value="ECO:0007669"/>
    <property type="project" value="InterPro"/>
</dbReference>
<dbReference type="GO" id="GO:0048709">
    <property type="term" value="P:oligodendrocyte differentiation"/>
    <property type="evidence" value="ECO:0007669"/>
    <property type="project" value="Ensembl"/>
</dbReference>
<dbReference type="GO" id="GO:0009636">
    <property type="term" value="P:response to toxic substance"/>
    <property type="evidence" value="ECO:0007669"/>
    <property type="project" value="Ensembl"/>
</dbReference>
<dbReference type="GO" id="GO:0021762">
    <property type="term" value="P:substantia nigra development"/>
    <property type="evidence" value="ECO:0007007"/>
    <property type="project" value="UniProtKB"/>
</dbReference>
<dbReference type="FunFam" id="3.40.50.300:FF:000795">
    <property type="entry name" value="Tetratricopeptide repeat protein 25"/>
    <property type="match status" value="1"/>
</dbReference>
<dbReference type="FunFam" id="3.90.1740.10:FF:000001">
    <property type="entry name" value="Tetratricopeptide repeat protein 25"/>
    <property type="match status" value="1"/>
</dbReference>
<dbReference type="Gene3D" id="3.90.1740.10">
    <property type="entry name" value="2',3'-cyclic nucleotide 3'-phosphodiesterase superfamily"/>
    <property type="match status" value="1"/>
</dbReference>
<dbReference type="Gene3D" id="3.40.50.300">
    <property type="entry name" value="P-loop containing nucleotide triphosphate hydrolases"/>
    <property type="match status" value="1"/>
</dbReference>
<dbReference type="InterPro" id="IPR008431">
    <property type="entry name" value="CNPase"/>
</dbReference>
<dbReference type="InterPro" id="IPR047325">
    <property type="entry name" value="CNPase_cat"/>
</dbReference>
<dbReference type="InterPro" id="IPR009097">
    <property type="entry name" value="Cyclic_Pdiesterase"/>
</dbReference>
<dbReference type="InterPro" id="IPR027417">
    <property type="entry name" value="P-loop_NTPase"/>
</dbReference>
<dbReference type="PANTHER" id="PTHR10156">
    <property type="entry name" value="2',3'-CYCLIC-NUCLEOTIDE 3'-PHOSPHODIESTERASE"/>
    <property type="match status" value="1"/>
</dbReference>
<dbReference type="PANTHER" id="PTHR10156:SF0">
    <property type="entry name" value="2',3'-CYCLIC-NUCLEOTIDE 3'-PHOSPHODIESTERASE"/>
    <property type="match status" value="1"/>
</dbReference>
<dbReference type="Pfam" id="PF13671">
    <property type="entry name" value="AAA_33"/>
    <property type="match status" value="1"/>
</dbReference>
<dbReference type="Pfam" id="PF05881">
    <property type="entry name" value="CNPase"/>
    <property type="match status" value="1"/>
</dbReference>
<dbReference type="PIRSF" id="PIRSF000970">
    <property type="entry name" value="CNPase"/>
    <property type="match status" value="1"/>
</dbReference>
<dbReference type="SUPFAM" id="SSF55144">
    <property type="entry name" value="LigT-like"/>
    <property type="match status" value="1"/>
</dbReference>
<dbReference type="SUPFAM" id="SSF52540">
    <property type="entry name" value="P-loop containing nucleoside triphosphate hydrolases"/>
    <property type="match status" value="1"/>
</dbReference>
<keyword id="KW-0002">3D-structure</keyword>
<keyword id="KW-0025">Alternative splicing</keyword>
<keyword id="KW-0903">Direct protein sequencing</keyword>
<keyword id="KW-0378">Hydrolase</keyword>
<keyword id="KW-1026">Leukodystrophy</keyword>
<keyword id="KW-0449">Lipoprotein</keyword>
<keyword id="KW-0472">Membrane</keyword>
<keyword id="KW-0488">Methylation</keyword>
<keyword id="KW-0523">Neurodegeneration</keyword>
<keyword id="KW-0597">Phosphoprotein</keyword>
<keyword id="KW-0636">Prenylation</keyword>
<keyword id="KW-1267">Proteomics identification</keyword>
<keyword id="KW-1185">Reference proteome</keyword>
<keyword id="KW-0694">RNA-binding</keyword>
<evidence type="ECO:0000250" key="1"/>
<evidence type="ECO:0000250" key="2">
    <source>
        <dbReference type="UniProtKB" id="P06623"/>
    </source>
</evidence>
<evidence type="ECO:0000250" key="3">
    <source>
        <dbReference type="UniProtKB" id="P13233"/>
    </source>
</evidence>
<evidence type="ECO:0000250" key="4">
    <source>
        <dbReference type="UniProtKB" id="P16330"/>
    </source>
</evidence>
<evidence type="ECO:0000269" key="5">
    <source>
    </source>
</evidence>
<evidence type="ECO:0000269" key="6">
    <source>
    </source>
</evidence>
<evidence type="ECO:0000303" key="7">
    <source>
    </source>
</evidence>
<evidence type="ECO:0000303" key="8">
    <source>
    </source>
</evidence>
<evidence type="ECO:0000305" key="9"/>
<evidence type="ECO:0000312" key="10">
    <source>
        <dbReference type="HGNC" id="HGNC:2158"/>
    </source>
</evidence>
<evidence type="ECO:0007744" key="11">
    <source>
    </source>
</evidence>
<evidence type="ECO:0007829" key="12">
    <source>
        <dbReference type="PDB" id="1WOJ"/>
    </source>
</evidence>
<protein>
    <recommendedName>
        <fullName evidence="9">2',3'-cyclic-nucleotide 3'-phosphodiesterase</fullName>
        <shortName>CNP</shortName>
        <shortName>CNPase</shortName>
        <ecNumber evidence="2">3.1.4.37</ecNumber>
    </recommendedName>
</protein>
<reference key="1">
    <citation type="journal article" date="1992" name="Biochem. Soc. Trans.">
        <title>2',3'-cyclic nucleotide-3'-phosphohydrolase and signal transduction in central nervous system myelin.</title>
        <authorList>
            <person name="Thompson R.J."/>
        </authorList>
    </citation>
    <scope>NUCLEOTIDE SEQUENCE [GENOMIC DNA]</scope>
</reference>
<reference key="2">
    <citation type="journal article" date="1988" name="Biochem. Biophys. Res. Commun.">
        <title>cDNA cloning and amino acid sequence of human brain 2',3'-cyclic-nucleotide 3'-phosphodiesterase.</title>
        <authorList>
            <person name="Kurihara T."/>
            <person name="Takahashi Y."/>
            <person name="Nishiyama A."/>
            <person name="Kumanishi T."/>
        </authorList>
    </citation>
    <scope>NUCLEOTIDE SEQUENCE [MRNA] (ISOFORM CNPI)</scope>
    <source>
        <tissue>Brain</tissue>
    </source>
</reference>
<reference key="3">
    <citation type="journal article" date="1993" name="Gene">
        <title>Structure, expression and chromosomal localization of the gene encoding human 2',3'-cyclic-nucleotide 3'-phosphodiesterase.</title>
        <authorList>
            <person name="Monoh K."/>
            <person name="Kurihara T."/>
            <person name="Takahashi Y."/>
            <person name="Ichikawa T."/>
            <person name="Kumanishi T."/>
            <person name="Hayashi S."/>
            <person name="Minoshima S."/>
            <person name="Shimizu N."/>
        </authorList>
    </citation>
    <scope>NUCLEOTIDE SEQUENCE [GENOMIC DNA]</scope>
</reference>
<reference key="4">
    <citation type="journal article" date="1992" name="Ann. Hum. Genet.">
        <title>Structure and chromosomal localization of the human 2',3'-cyclic nucleotide 3'-phosphodiesterase gene.</title>
        <authorList>
            <person name="Douglas A.J."/>
            <person name="Fox M.F."/>
            <person name="Abbott C.M."/>
            <person name="Hinks L.J."/>
            <person name="Sharpe G."/>
            <person name="Povey S."/>
            <person name="Thompson R.J."/>
        </authorList>
    </citation>
    <scope>NUCLEOTIDE SEQUENCE [GENOMIC DNA]</scope>
</reference>
<reference key="5">
    <citation type="journal article" date="2006" name="Nature">
        <title>DNA sequence of human chromosome 17 and analysis of rearrangement in the human lineage.</title>
        <authorList>
            <person name="Zody M.C."/>
            <person name="Garber M."/>
            <person name="Adams D.J."/>
            <person name="Sharpe T."/>
            <person name="Harrow J."/>
            <person name="Lupski J.R."/>
            <person name="Nicholson C."/>
            <person name="Searle S.M."/>
            <person name="Wilming L."/>
            <person name="Young S.K."/>
            <person name="Abouelleil A."/>
            <person name="Allen N.R."/>
            <person name="Bi W."/>
            <person name="Bloom T."/>
            <person name="Borowsky M.L."/>
            <person name="Bugalter B.E."/>
            <person name="Butler J."/>
            <person name="Chang J.L."/>
            <person name="Chen C.-K."/>
            <person name="Cook A."/>
            <person name="Corum B."/>
            <person name="Cuomo C.A."/>
            <person name="de Jong P.J."/>
            <person name="DeCaprio D."/>
            <person name="Dewar K."/>
            <person name="FitzGerald M."/>
            <person name="Gilbert J."/>
            <person name="Gibson R."/>
            <person name="Gnerre S."/>
            <person name="Goldstein S."/>
            <person name="Grafham D.V."/>
            <person name="Grocock R."/>
            <person name="Hafez N."/>
            <person name="Hagopian D.S."/>
            <person name="Hart E."/>
            <person name="Norman C.H."/>
            <person name="Humphray S."/>
            <person name="Jaffe D.B."/>
            <person name="Jones M."/>
            <person name="Kamal M."/>
            <person name="Khodiyar V.K."/>
            <person name="LaButti K."/>
            <person name="Laird G."/>
            <person name="Lehoczky J."/>
            <person name="Liu X."/>
            <person name="Lokyitsang T."/>
            <person name="Loveland J."/>
            <person name="Lui A."/>
            <person name="Macdonald P."/>
            <person name="Major J.E."/>
            <person name="Matthews L."/>
            <person name="Mauceli E."/>
            <person name="McCarroll S.A."/>
            <person name="Mihalev A.H."/>
            <person name="Mudge J."/>
            <person name="Nguyen C."/>
            <person name="Nicol R."/>
            <person name="O'Leary S.B."/>
            <person name="Osoegawa K."/>
            <person name="Schwartz D.C."/>
            <person name="Shaw-Smith C."/>
            <person name="Stankiewicz P."/>
            <person name="Steward C."/>
            <person name="Swarbreck D."/>
            <person name="Venkataraman V."/>
            <person name="Whittaker C.A."/>
            <person name="Yang X."/>
            <person name="Zimmer A.R."/>
            <person name="Bradley A."/>
            <person name="Hubbard T."/>
            <person name="Birren B.W."/>
            <person name="Rogers J."/>
            <person name="Lander E.S."/>
            <person name="Nusbaum C."/>
        </authorList>
    </citation>
    <scope>NUCLEOTIDE SEQUENCE [LARGE SCALE GENOMIC DNA]</scope>
</reference>
<reference key="6">
    <citation type="journal article" date="2004" name="Genome Res.">
        <title>The status, quality, and expansion of the NIH full-length cDNA project: the Mammalian Gene Collection (MGC).</title>
        <authorList>
            <consortium name="The MGC Project Team"/>
        </authorList>
    </citation>
    <scope>NUCLEOTIDE SEQUENCE [LARGE SCALE MRNA] (ISOFORMS CNPI AND CNPII)</scope>
    <source>
        <tissue>Brain</tissue>
        <tissue>Skin</tissue>
    </source>
</reference>
<reference key="7">
    <citation type="journal article" date="1997" name="Biochem. Biophys. Res. Commun.">
        <title>The epitope recognized by a monoclonal antibody in the myelin-associated protein CNP.</title>
        <authorList>
            <person name="Stricker R."/>
            <person name="Kalbacher H."/>
            <person name="Reiser G."/>
        </authorList>
    </citation>
    <scope>PROTEIN SEQUENCE OF 21-58</scope>
</reference>
<reference key="8">
    <citation type="journal article" date="2003" name="J. Proteome Res.">
        <title>Proteomic analysis of early melanosomes: identification of novel melanosomal proteins.</title>
        <authorList>
            <person name="Basrur V."/>
            <person name="Yang F."/>
            <person name="Kushimoto T."/>
            <person name="Higashimoto Y."/>
            <person name="Yasumoto K."/>
            <person name="Valencia J."/>
            <person name="Muller J."/>
            <person name="Vieira W.D."/>
            <person name="Watabe H."/>
            <person name="Shabanowitz J."/>
            <person name="Hearing V.J."/>
            <person name="Hunt D.F."/>
            <person name="Appella E."/>
        </authorList>
    </citation>
    <scope>SUBCELLULAR LOCATION [LARGE SCALE ANALYSIS]</scope>
    <source>
        <tissue>Melanoma</tissue>
    </source>
</reference>
<reference key="9">
    <citation type="journal article" date="2006" name="J. Proteome Res.">
        <title>Proteomic and bioinformatic characterization of the biogenesis and function of melanosomes.</title>
        <authorList>
            <person name="Chi A."/>
            <person name="Valencia J.C."/>
            <person name="Hu Z.-Z."/>
            <person name="Watabe H."/>
            <person name="Yamaguchi H."/>
            <person name="Mangini N.J."/>
            <person name="Huang H."/>
            <person name="Canfield V.A."/>
            <person name="Cheng K.C."/>
            <person name="Yang F."/>
            <person name="Abe R."/>
            <person name="Yamagishi S."/>
            <person name="Shabanowitz J."/>
            <person name="Hearing V.J."/>
            <person name="Wu C."/>
            <person name="Appella E."/>
            <person name="Hunt D.F."/>
        </authorList>
    </citation>
    <scope>SUBCELLULAR LOCATION [LARGE SCALE ANALYSIS]</scope>
    <source>
        <tissue>Melanoma</tissue>
    </source>
</reference>
<reference key="10">
    <citation type="journal article" date="2009" name="Anal. Chem.">
        <title>Lys-N and trypsin cover complementary parts of the phosphoproteome in a refined SCX-based approach.</title>
        <authorList>
            <person name="Gauci S."/>
            <person name="Helbig A.O."/>
            <person name="Slijper M."/>
            <person name="Krijgsveld J."/>
            <person name="Heck A.J."/>
            <person name="Mohammed S."/>
        </authorList>
    </citation>
    <scope>IDENTIFICATION BY MASS SPECTROMETRY [LARGE SCALE ANALYSIS]</scope>
</reference>
<reference key="11">
    <citation type="journal article" date="2011" name="BMC Syst. Biol.">
        <title>Initial characterization of the human central proteome.</title>
        <authorList>
            <person name="Burkard T.R."/>
            <person name="Planyavsky M."/>
            <person name="Kaupe I."/>
            <person name="Breitwieser F.P."/>
            <person name="Buerckstuemmer T."/>
            <person name="Bennett K.L."/>
            <person name="Superti-Furga G."/>
            <person name="Colinge J."/>
        </authorList>
    </citation>
    <scope>IDENTIFICATION BY MASS SPECTROMETRY [LARGE SCALE ANALYSIS]</scope>
</reference>
<reference key="12">
    <citation type="journal article" date="2013" name="J. Proteome Res.">
        <title>Toward a comprehensive characterization of a human cancer cell phosphoproteome.</title>
        <authorList>
            <person name="Zhou H."/>
            <person name="Di Palma S."/>
            <person name="Preisinger C."/>
            <person name="Peng M."/>
            <person name="Polat A.N."/>
            <person name="Heck A.J."/>
            <person name="Mohammed S."/>
        </authorList>
    </citation>
    <scope>PHOSPHORYLATION [LARGE SCALE ANALYSIS] AT SER-6; SER-9 AND SER-170</scope>
    <scope>IDENTIFICATION BY MASS SPECTROMETRY [LARGE SCALE ANALYSIS]</scope>
    <source>
        <tissue>Cervix carcinoma</tissue>
        <tissue>Erythroleukemia</tissue>
    </source>
</reference>
<reference key="13">
    <citation type="journal article" date="2014" name="J. Proteomics">
        <title>An enzyme assisted RP-RPLC approach for in-depth analysis of human liver phosphoproteome.</title>
        <authorList>
            <person name="Bian Y."/>
            <person name="Song C."/>
            <person name="Cheng K."/>
            <person name="Dong M."/>
            <person name="Wang F."/>
            <person name="Huang J."/>
            <person name="Sun D."/>
            <person name="Wang L."/>
            <person name="Ye M."/>
            <person name="Zou H."/>
        </authorList>
    </citation>
    <scope>IDENTIFICATION BY MASS SPECTROMETRY [LARGE SCALE ANALYSIS]</scope>
    <source>
        <tissue>Liver</tissue>
    </source>
</reference>
<reference key="14">
    <citation type="journal article" date="2015" name="Proteomics">
        <title>N-terminome analysis of the human mitochondrial proteome.</title>
        <authorList>
            <person name="Vaca Jacome A.S."/>
            <person name="Rabilloud T."/>
            <person name="Schaeffer-Reiss C."/>
            <person name="Rompais M."/>
            <person name="Ayoub D."/>
            <person name="Lane L."/>
            <person name="Bairoch A."/>
            <person name="Van Dorsselaer A."/>
            <person name="Carapito C."/>
        </authorList>
    </citation>
    <scope>IDENTIFICATION BY MASS SPECTROMETRY [LARGE SCALE ANALYSIS]</scope>
</reference>
<reference key="15">
    <citation type="journal article" date="2005" name="J. Mol. Biol.">
        <title>Crystal structure of the catalytic fragment of human brain 2',3'-cyclic-nucleotide 3'-phosphodiesterase.</title>
        <authorList>
            <person name="Sakamoto Y."/>
            <person name="Tanaka N."/>
            <person name="Ichimiya T."/>
            <person name="Kurihara T."/>
            <person name="Nakamura K.T."/>
        </authorList>
    </citation>
    <scope>X-RAY CRYSTALLOGRAPHY (1.8 ANGSTROMS) OF 186-399 IN COMPLEX WITH PHOSPHATE</scope>
</reference>
<reference key="16">
    <citation type="journal article" date="2020" name="Hum. Genet.">
        <title>CNP deficiency causes severe hypomyelinating leukodystrophy in humans.</title>
        <authorList>
            <person name="Al-Abdi L."/>
            <person name="Al Murshedi F."/>
            <person name="Elmanzalawy A."/>
            <person name="Al Habsi A."/>
            <person name="Helaby R."/>
            <person name="Ganesh A."/>
            <person name="Ibrahim N."/>
            <person name="Patel N."/>
            <person name="Alkuraya F.S."/>
        </authorList>
    </citation>
    <scope>VARIANT HLD20 LEU-82</scope>
    <scope>CHARACTERIZATION OF VARIANT HLD20 LEU-82</scope>
    <scope>INVOLVEMENT IN HLD20</scope>
</reference>
<gene>
    <name evidence="10" type="primary">CNP</name>
</gene>